<sequence>MKKYLAITSKGLENLLADELVALGVTDPKLVYAGVTFEAPIEVVYRCCLWSRIASRFIQILSEFDVRDDMDLYLGASAINWPNYFTADKTLVVDFNGTNREIRNSQYGALKVKDAIVDRFTKADLERPNIDKAEPDLRVHMRLSGEKGILGFDLIGSGLHQRGYRTEAGRAPLRETLAAALVLRSTWDESKPLLDPMCGSGTLLIEAALMACEMAPGVKREKWCFEALSDFDPEVWTEIRSEARVKSRRGVKKVDTHFYGFDRDYRVIQTARDNARRAGVEDLITFDVGDATKIERPEGFENGVVICNPPYGERLSTEPALIALYSEFGRQLKEQFGGCTASIYSSNDDLLACIRMRADKQFKLNNGALPCVQKNYSISESAERKEAANIEVAPEFMNRLKKNLSKLGKWARKEKLDCYRLYDADLPDYNAAIDVYKDYIIIQEYTAPKEISEDKARRRLTDMIRATVLVTGVETNNVILKVRQKQSGKNQYQKLAEKSRYFDVEEYGVKLIVNLQDYLDTGLFLDHKLTRKMIGDMAAGKDFLNLFAYTGSATVHAACGGAKSTMTIDMSRTYLEWAQKNMNTNDQTGTQHQFLQADCLQWLQQAEGEFDLIFIDPPTFSNSKRMDQTFDVQRDHIMLLENLKRMLRQDGTVVFSNNKRNFKMDEEALDKAGLQAKNISKQTLPLDFARNKHIHNCWIITHKED</sequence>
<protein>
    <recommendedName>
        <fullName evidence="1">Ribosomal RNA large subunit methyltransferase K/L</fullName>
    </recommendedName>
    <domain>
        <recommendedName>
            <fullName evidence="1">23S rRNA m2G2445 methyltransferase</fullName>
            <ecNumber evidence="1">2.1.1.173</ecNumber>
        </recommendedName>
        <alternativeName>
            <fullName evidence="1">rRNA (guanine-N(2)-)-methyltransferase RlmL</fullName>
        </alternativeName>
    </domain>
    <domain>
        <recommendedName>
            <fullName evidence="1">23S rRNA m7G2069 methyltransferase</fullName>
            <ecNumber evidence="1">2.1.1.264</ecNumber>
        </recommendedName>
        <alternativeName>
            <fullName evidence="1">rRNA (guanine-N(7)-)-methyltransferase RlmK</fullName>
        </alternativeName>
    </domain>
</protein>
<dbReference type="EC" id="2.1.1.173" evidence="1"/>
<dbReference type="EC" id="2.1.1.264" evidence="1"/>
<dbReference type="EMBL" id="FM178379">
    <property type="protein sequence ID" value="CAQ79236.1"/>
    <property type="status" value="ALT_INIT"/>
    <property type="molecule type" value="Genomic_DNA"/>
</dbReference>
<dbReference type="RefSeq" id="WP_044583252.1">
    <property type="nucleotide sequence ID" value="NC_011312.1"/>
</dbReference>
<dbReference type="SMR" id="B6ELD3"/>
<dbReference type="KEGG" id="vsa:VSAL_I1551"/>
<dbReference type="eggNOG" id="COG0116">
    <property type="taxonomic scope" value="Bacteria"/>
</dbReference>
<dbReference type="eggNOG" id="COG1092">
    <property type="taxonomic scope" value="Bacteria"/>
</dbReference>
<dbReference type="HOGENOM" id="CLU_014042_2_0_6"/>
<dbReference type="Proteomes" id="UP000001730">
    <property type="component" value="Chromosome 1"/>
</dbReference>
<dbReference type="GO" id="GO:0005737">
    <property type="term" value="C:cytoplasm"/>
    <property type="evidence" value="ECO:0007669"/>
    <property type="project" value="UniProtKB-SubCell"/>
</dbReference>
<dbReference type="GO" id="GO:0052915">
    <property type="term" value="F:23S rRNA (guanine(2445)-N(2))-methyltransferase activity"/>
    <property type="evidence" value="ECO:0007669"/>
    <property type="project" value="UniProtKB-UniRule"/>
</dbReference>
<dbReference type="GO" id="GO:0003723">
    <property type="term" value="F:RNA binding"/>
    <property type="evidence" value="ECO:0007669"/>
    <property type="project" value="UniProtKB-KW"/>
</dbReference>
<dbReference type="GO" id="GO:0070043">
    <property type="term" value="F:rRNA (guanine-N7-)-methyltransferase activity"/>
    <property type="evidence" value="ECO:0007669"/>
    <property type="project" value="UniProtKB-UniRule"/>
</dbReference>
<dbReference type="CDD" id="cd02440">
    <property type="entry name" value="AdoMet_MTases"/>
    <property type="match status" value="1"/>
</dbReference>
<dbReference type="CDD" id="cd11715">
    <property type="entry name" value="THUMP_AdoMetMT"/>
    <property type="match status" value="1"/>
</dbReference>
<dbReference type="FunFam" id="3.40.50.150:FF:000039">
    <property type="entry name" value="Ribosomal RNA large subunit methyltransferase K/L"/>
    <property type="match status" value="1"/>
</dbReference>
<dbReference type="Gene3D" id="3.30.2130.30">
    <property type="match status" value="1"/>
</dbReference>
<dbReference type="Gene3D" id="3.30.750.80">
    <property type="entry name" value="RNA methyltransferase domain (HRMD) like"/>
    <property type="match status" value="1"/>
</dbReference>
<dbReference type="Gene3D" id="3.40.50.150">
    <property type="entry name" value="Vaccinia Virus protein VP39"/>
    <property type="match status" value="2"/>
</dbReference>
<dbReference type="HAMAP" id="MF_01858">
    <property type="entry name" value="23SrRNA_methyltr_KL"/>
    <property type="match status" value="1"/>
</dbReference>
<dbReference type="InterPro" id="IPR017244">
    <property type="entry name" value="23SrRNA_methyltr_KL"/>
</dbReference>
<dbReference type="InterPro" id="IPR002052">
    <property type="entry name" value="DNA_methylase_N6_adenine_CS"/>
</dbReference>
<dbReference type="InterPro" id="IPR000241">
    <property type="entry name" value="RlmKL-like_Mtase"/>
</dbReference>
<dbReference type="InterPro" id="IPR053943">
    <property type="entry name" value="RlmKL-like_Mtase_CS"/>
</dbReference>
<dbReference type="InterPro" id="IPR054170">
    <property type="entry name" value="RlmL_1st"/>
</dbReference>
<dbReference type="InterPro" id="IPR019614">
    <property type="entry name" value="SAM-dep_methyl-trfase"/>
</dbReference>
<dbReference type="InterPro" id="IPR029063">
    <property type="entry name" value="SAM-dependent_MTases_sf"/>
</dbReference>
<dbReference type="InterPro" id="IPR004114">
    <property type="entry name" value="THUMP_dom"/>
</dbReference>
<dbReference type="NCBIfam" id="NF008748">
    <property type="entry name" value="PRK11783.1"/>
    <property type="match status" value="1"/>
</dbReference>
<dbReference type="PANTHER" id="PTHR47313">
    <property type="entry name" value="RIBOSOMAL RNA LARGE SUBUNIT METHYLTRANSFERASE K/L"/>
    <property type="match status" value="1"/>
</dbReference>
<dbReference type="PANTHER" id="PTHR47313:SF1">
    <property type="entry name" value="RIBOSOMAL RNA LARGE SUBUNIT METHYLTRANSFERASE K_L"/>
    <property type="match status" value="1"/>
</dbReference>
<dbReference type="Pfam" id="PF10672">
    <property type="entry name" value="Methyltrans_SAM"/>
    <property type="match status" value="1"/>
</dbReference>
<dbReference type="Pfam" id="PF22020">
    <property type="entry name" value="RlmL_1st"/>
    <property type="match status" value="1"/>
</dbReference>
<dbReference type="Pfam" id="PF02926">
    <property type="entry name" value="THUMP"/>
    <property type="match status" value="1"/>
</dbReference>
<dbReference type="Pfam" id="PF01170">
    <property type="entry name" value="UPF0020"/>
    <property type="match status" value="1"/>
</dbReference>
<dbReference type="PIRSF" id="PIRSF037618">
    <property type="entry name" value="RNA_Mtase_bacteria_prd"/>
    <property type="match status" value="1"/>
</dbReference>
<dbReference type="SMART" id="SM00981">
    <property type="entry name" value="THUMP"/>
    <property type="match status" value="1"/>
</dbReference>
<dbReference type="SUPFAM" id="SSF53335">
    <property type="entry name" value="S-adenosyl-L-methionine-dependent methyltransferases"/>
    <property type="match status" value="2"/>
</dbReference>
<dbReference type="PROSITE" id="PS51165">
    <property type="entry name" value="THUMP"/>
    <property type="match status" value="1"/>
</dbReference>
<dbReference type="PROSITE" id="PS01261">
    <property type="entry name" value="UPF0020"/>
    <property type="match status" value="1"/>
</dbReference>
<name>RLMKL_ALISL</name>
<evidence type="ECO:0000255" key="1">
    <source>
        <dbReference type="HAMAP-Rule" id="MF_01858"/>
    </source>
</evidence>
<evidence type="ECO:0000305" key="2"/>
<proteinExistence type="inferred from homology"/>
<keyword id="KW-0963">Cytoplasm</keyword>
<keyword id="KW-0489">Methyltransferase</keyword>
<keyword id="KW-0694">RNA-binding</keyword>
<keyword id="KW-0698">rRNA processing</keyword>
<keyword id="KW-0949">S-adenosyl-L-methionine</keyword>
<keyword id="KW-0808">Transferase</keyword>
<comment type="function">
    <text evidence="1">Specifically methylates the guanine in position 2445 (m2G2445) and the guanine in position 2069 (m7G2069) of 23S rRNA.</text>
</comment>
<comment type="catalytic activity">
    <reaction evidence="1">
        <text>guanosine(2445) in 23S rRNA + S-adenosyl-L-methionine = N(2)-methylguanosine(2445) in 23S rRNA + S-adenosyl-L-homocysteine + H(+)</text>
        <dbReference type="Rhea" id="RHEA:42740"/>
        <dbReference type="Rhea" id="RHEA-COMP:10215"/>
        <dbReference type="Rhea" id="RHEA-COMP:10216"/>
        <dbReference type="ChEBI" id="CHEBI:15378"/>
        <dbReference type="ChEBI" id="CHEBI:57856"/>
        <dbReference type="ChEBI" id="CHEBI:59789"/>
        <dbReference type="ChEBI" id="CHEBI:74269"/>
        <dbReference type="ChEBI" id="CHEBI:74481"/>
        <dbReference type="EC" id="2.1.1.173"/>
    </reaction>
</comment>
<comment type="catalytic activity">
    <reaction evidence="1">
        <text>guanosine(2069) in 23S rRNA + S-adenosyl-L-methionine = N(2)-methylguanosine(2069) in 23S rRNA + S-adenosyl-L-homocysteine + H(+)</text>
        <dbReference type="Rhea" id="RHEA:43772"/>
        <dbReference type="Rhea" id="RHEA-COMP:10688"/>
        <dbReference type="Rhea" id="RHEA-COMP:10689"/>
        <dbReference type="ChEBI" id="CHEBI:15378"/>
        <dbReference type="ChEBI" id="CHEBI:57856"/>
        <dbReference type="ChEBI" id="CHEBI:59789"/>
        <dbReference type="ChEBI" id="CHEBI:74269"/>
        <dbReference type="ChEBI" id="CHEBI:74481"/>
        <dbReference type="EC" id="2.1.1.264"/>
    </reaction>
</comment>
<comment type="subcellular location">
    <subcellularLocation>
        <location evidence="1">Cytoplasm</location>
    </subcellularLocation>
</comment>
<comment type="similarity">
    <text evidence="1">Belongs to the methyltransferase superfamily. RlmKL family.</text>
</comment>
<comment type="sequence caution" evidence="2">
    <conflict type="erroneous initiation">
        <sequence resource="EMBL-CDS" id="CAQ79236"/>
    </conflict>
    <text>Extended N-terminus.</text>
</comment>
<organism>
    <name type="scientific">Aliivibrio salmonicida (strain LFI1238)</name>
    <name type="common">Vibrio salmonicida (strain LFI1238)</name>
    <dbReference type="NCBI Taxonomy" id="316275"/>
    <lineage>
        <taxon>Bacteria</taxon>
        <taxon>Pseudomonadati</taxon>
        <taxon>Pseudomonadota</taxon>
        <taxon>Gammaproteobacteria</taxon>
        <taxon>Vibrionales</taxon>
        <taxon>Vibrionaceae</taxon>
        <taxon>Aliivibrio</taxon>
    </lineage>
</organism>
<feature type="chain" id="PRO_0000366725" description="Ribosomal RNA large subunit methyltransferase K/L">
    <location>
        <begin position="1"/>
        <end position="705"/>
    </location>
</feature>
<feature type="domain" description="THUMP" evidence="1">
    <location>
        <begin position="43"/>
        <end position="154"/>
    </location>
</feature>
<reference key="1">
    <citation type="journal article" date="2008" name="BMC Genomics">
        <title>The genome sequence of the fish pathogen Aliivibrio salmonicida strain LFI1238 shows extensive evidence of gene decay.</title>
        <authorList>
            <person name="Hjerde E."/>
            <person name="Lorentzen M.S."/>
            <person name="Holden M.T."/>
            <person name="Seeger K."/>
            <person name="Paulsen S."/>
            <person name="Bason N."/>
            <person name="Churcher C."/>
            <person name="Harris D."/>
            <person name="Norbertczak H."/>
            <person name="Quail M.A."/>
            <person name="Sanders S."/>
            <person name="Thurston S."/>
            <person name="Parkhill J."/>
            <person name="Willassen N.P."/>
            <person name="Thomson N.R."/>
        </authorList>
    </citation>
    <scope>NUCLEOTIDE SEQUENCE [LARGE SCALE GENOMIC DNA]</scope>
    <source>
        <strain>LFI1238</strain>
    </source>
</reference>
<accession>B6ELD3</accession>
<gene>
    <name evidence="1" type="primary">rlmL</name>
    <name type="ordered locus">VSAL_I1551</name>
</gene>